<keyword id="KW-0025">Alternative splicing</keyword>
<keyword id="KW-0119">Carbohydrate metabolism</keyword>
<keyword id="KW-0146">Chitin degradation</keyword>
<keyword id="KW-0147">Chitin-binding</keyword>
<keyword id="KW-1015">Disulfide bond</keyword>
<keyword id="KW-0326">Glycosidase</keyword>
<keyword id="KW-0378">Hydrolase</keyword>
<keyword id="KW-0458">Lysosome</keyword>
<keyword id="KW-0624">Polysaccharide degradation</keyword>
<keyword id="KW-1185">Reference proteome</keyword>
<keyword id="KW-0964">Secreted</keyword>
<keyword id="KW-0732">Signal</keyword>
<dbReference type="EC" id="3.2.1.14"/>
<dbReference type="EMBL" id="AY458654">
    <property type="protein sequence ID" value="AAR14312.1"/>
    <property type="molecule type" value="mRNA"/>
</dbReference>
<dbReference type="EMBL" id="AY536287">
    <property type="protein sequence ID" value="AAS47832.1"/>
    <property type="molecule type" value="mRNA"/>
</dbReference>
<dbReference type="EMBL" id="AK009012">
    <property type="protein sequence ID" value="BAB26025.1"/>
    <property type="molecule type" value="mRNA"/>
</dbReference>
<dbReference type="CCDS" id="CCDS15304.1">
    <molecule id="Q9D7Q1-1"/>
</dbReference>
<dbReference type="CCDS" id="CCDS69943.1">
    <molecule id="Q9D7Q1-2"/>
</dbReference>
<dbReference type="RefSeq" id="NP_001271453.1">
    <molecule id="Q9D7Q1-2"/>
    <property type="nucleotide sequence ID" value="NM_001284524.1"/>
</dbReference>
<dbReference type="RefSeq" id="NP_001271454.1">
    <molecule id="Q9D7Q1-1"/>
    <property type="nucleotide sequence ID" value="NM_001284525.1"/>
</dbReference>
<dbReference type="RefSeq" id="NP_082255.1">
    <molecule id="Q9D7Q1-1"/>
    <property type="nucleotide sequence ID" value="NM_027979.2"/>
</dbReference>
<dbReference type="RefSeq" id="XP_006529942.1">
    <molecule id="Q9D7Q1-1"/>
    <property type="nucleotide sequence ID" value="XM_006529879.3"/>
</dbReference>
<dbReference type="RefSeq" id="XP_006529943.1">
    <molecule id="Q9D7Q1-1"/>
    <property type="nucleotide sequence ID" value="XM_006529880.2"/>
</dbReference>
<dbReference type="RefSeq" id="XP_006529944.1">
    <molecule id="Q9D7Q1-2"/>
    <property type="nucleotide sequence ID" value="XM_006529881.3"/>
</dbReference>
<dbReference type="SMR" id="Q9D7Q1"/>
<dbReference type="FunCoup" id="Q9D7Q1">
    <property type="interactions" value="105"/>
</dbReference>
<dbReference type="STRING" id="10090.ENSMUSP00000123979"/>
<dbReference type="BindingDB" id="Q9D7Q1"/>
<dbReference type="ChEMBL" id="CHEMBL4105845"/>
<dbReference type="GuidetoPHARMACOLOGY" id="3187"/>
<dbReference type="CAZy" id="CBM14">
    <property type="family name" value="Carbohydrate-Binding Module Family 14"/>
</dbReference>
<dbReference type="CAZy" id="GH18">
    <property type="family name" value="Glycoside Hydrolase Family 18"/>
</dbReference>
<dbReference type="PhosphoSitePlus" id="Q9D7Q1"/>
<dbReference type="CPTAC" id="non-CPTAC-3569"/>
<dbReference type="PaxDb" id="10090-ENSMUSP00000123979"/>
<dbReference type="PeptideAtlas" id="Q9D7Q1"/>
<dbReference type="ProteomicsDB" id="283906">
    <molecule id="Q9D7Q1-1"/>
</dbReference>
<dbReference type="ProteomicsDB" id="283907">
    <molecule id="Q9D7Q1-2"/>
</dbReference>
<dbReference type="Antibodypedia" id="2441">
    <property type="antibodies" value="244 antibodies from 33 providers"/>
</dbReference>
<dbReference type="DNASU" id="71884"/>
<dbReference type="Ensembl" id="ENSMUST00000086475.3">
    <molecule id="Q9D7Q1-1"/>
    <property type="protein sequence ID" value="ENSMUSP00000083666.3"/>
    <property type="gene ID" value="ENSMUSG00000026450.15"/>
</dbReference>
<dbReference type="Ensembl" id="ENSMUST00000159963.8">
    <molecule id="Q9D7Q1-1"/>
    <property type="protein sequence ID" value="ENSMUSP00000123979.2"/>
    <property type="gene ID" value="ENSMUSG00000026450.15"/>
</dbReference>
<dbReference type="Ensembl" id="ENSMUST00000160060.8">
    <molecule id="Q9D7Q1-2"/>
    <property type="protein sequence ID" value="ENSMUSP00000124331.2"/>
    <property type="gene ID" value="ENSMUSG00000026450.15"/>
</dbReference>
<dbReference type="GeneID" id="71884"/>
<dbReference type="KEGG" id="mmu:71884"/>
<dbReference type="UCSC" id="uc007crf.2">
    <molecule id="Q9D7Q1-1"/>
    <property type="organism name" value="mouse"/>
</dbReference>
<dbReference type="UCSC" id="uc033flh.1">
    <molecule id="Q9D7Q1-2"/>
    <property type="organism name" value="mouse"/>
</dbReference>
<dbReference type="AGR" id="MGI:1919134"/>
<dbReference type="CTD" id="1118"/>
<dbReference type="MGI" id="MGI:1919134">
    <property type="gene designation" value="Chit1"/>
</dbReference>
<dbReference type="VEuPathDB" id="HostDB:ENSMUSG00000026450"/>
<dbReference type="eggNOG" id="KOG2806">
    <property type="taxonomic scope" value="Eukaryota"/>
</dbReference>
<dbReference type="GeneTree" id="ENSGT00940000161149"/>
<dbReference type="HOGENOM" id="CLU_002833_3_1_1"/>
<dbReference type="InParanoid" id="Q9D7Q1"/>
<dbReference type="OMA" id="NPMTYDF"/>
<dbReference type="OrthoDB" id="76388at2759"/>
<dbReference type="PhylomeDB" id="Q9D7Q1"/>
<dbReference type="TreeFam" id="TF315610"/>
<dbReference type="Reactome" id="R-MMU-189085">
    <property type="pathway name" value="Digestion of dietary carbohydrate"/>
</dbReference>
<dbReference type="Reactome" id="R-MMU-6798695">
    <property type="pathway name" value="Neutrophil degranulation"/>
</dbReference>
<dbReference type="BioGRID-ORCS" id="71884">
    <property type="hits" value="1 hit in 79 CRISPR screens"/>
</dbReference>
<dbReference type="ChiTaRS" id="Chit1">
    <property type="organism name" value="mouse"/>
</dbReference>
<dbReference type="PRO" id="PR:Q9D7Q1"/>
<dbReference type="Proteomes" id="UP000000589">
    <property type="component" value="Chromosome 1"/>
</dbReference>
<dbReference type="RNAct" id="Q9D7Q1">
    <property type="molecule type" value="protein"/>
</dbReference>
<dbReference type="Bgee" id="ENSMUSG00000026450">
    <property type="expression patterns" value="Expressed in lip and 31 other cell types or tissues"/>
</dbReference>
<dbReference type="ExpressionAtlas" id="Q9D7Q1">
    <property type="expression patterns" value="baseline and differential"/>
</dbReference>
<dbReference type="GO" id="GO:0005615">
    <property type="term" value="C:extracellular space"/>
    <property type="evidence" value="ECO:0007669"/>
    <property type="project" value="Ensembl"/>
</dbReference>
<dbReference type="GO" id="GO:0005764">
    <property type="term" value="C:lysosome"/>
    <property type="evidence" value="ECO:0007669"/>
    <property type="project" value="UniProtKB-SubCell"/>
</dbReference>
<dbReference type="GO" id="GO:0008061">
    <property type="term" value="F:chitin binding"/>
    <property type="evidence" value="ECO:0007669"/>
    <property type="project" value="UniProtKB-KW"/>
</dbReference>
<dbReference type="GO" id="GO:0008843">
    <property type="term" value="F:endochitinase activity"/>
    <property type="evidence" value="ECO:0007669"/>
    <property type="project" value="UniProtKB-EC"/>
</dbReference>
<dbReference type="GO" id="GO:0006032">
    <property type="term" value="P:chitin catabolic process"/>
    <property type="evidence" value="ECO:0000250"/>
    <property type="project" value="UniProtKB"/>
</dbReference>
<dbReference type="GO" id="GO:0000272">
    <property type="term" value="P:polysaccharide catabolic process"/>
    <property type="evidence" value="ECO:0007669"/>
    <property type="project" value="UniProtKB-KW"/>
</dbReference>
<dbReference type="CDD" id="cd02872">
    <property type="entry name" value="GH18_chitolectin_chitotriosidase"/>
    <property type="match status" value="1"/>
</dbReference>
<dbReference type="FunFam" id="2.170.140.10:FF:000001">
    <property type="entry name" value="Acidic mammalian chitinase"/>
    <property type="match status" value="1"/>
</dbReference>
<dbReference type="FunFam" id="3.20.20.80:FF:000081">
    <property type="entry name" value="Chitinase 1"/>
    <property type="match status" value="1"/>
</dbReference>
<dbReference type="FunFam" id="3.10.50.10:FF:000001">
    <property type="entry name" value="Chitinase 3-like 1"/>
    <property type="match status" value="1"/>
</dbReference>
<dbReference type="FunFam" id="3.20.20.80:FF:000220">
    <property type="entry name" value="Chitotriosidase-1"/>
    <property type="match status" value="1"/>
</dbReference>
<dbReference type="Gene3D" id="3.20.20.80">
    <property type="entry name" value="Glycosidases"/>
    <property type="match status" value="2"/>
</dbReference>
<dbReference type="InterPro" id="IPR002557">
    <property type="entry name" value="Chitin-bd_dom"/>
</dbReference>
<dbReference type="InterPro" id="IPR036508">
    <property type="entry name" value="Chitin-bd_dom_sf"/>
</dbReference>
<dbReference type="InterPro" id="IPR011583">
    <property type="entry name" value="Chitinase_II/V-like_cat"/>
</dbReference>
<dbReference type="InterPro" id="IPR029070">
    <property type="entry name" value="Chitinase_insertion_sf"/>
</dbReference>
<dbReference type="InterPro" id="IPR001223">
    <property type="entry name" value="Glyco_hydro18_cat"/>
</dbReference>
<dbReference type="InterPro" id="IPR001579">
    <property type="entry name" value="Glyco_hydro_18_chit_AS"/>
</dbReference>
<dbReference type="InterPro" id="IPR017853">
    <property type="entry name" value="Glycoside_hydrolase_SF"/>
</dbReference>
<dbReference type="InterPro" id="IPR050314">
    <property type="entry name" value="Glycosyl_Hydrlase_18"/>
</dbReference>
<dbReference type="PANTHER" id="PTHR11177">
    <property type="entry name" value="CHITINASE"/>
    <property type="match status" value="1"/>
</dbReference>
<dbReference type="PANTHER" id="PTHR11177:SF248">
    <property type="entry name" value="CHITOTRIOSIDASE-1"/>
    <property type="match status" value="1"/>
</dbReference>
<dbReference type="Pfam" id="PF01607">
    <property type="entry name" value="CBM_14"/>
    <property type="match status" value="1"/>
</dbReference>
<dbReference type="Pfam" id="PF00704">
    <property type="entry name" value="Glyco_hydro_18"/>
    <property type="match status" value="1"/>
</dbReference>
<dbReference type="SMART" id="SM00494">
    <property type="entry name" value="ChtBD2"/>
    <property type="match status" value="1"/>
</dbReference>
<dbReference type="SMART" id="SM00636">
    <property type="entry name" value="Glyco_18"/>
    <property type="match status" value="1"/>
</dbReference>
<dbReference type="SUPFAM" id="SSF51445">
    <property type="entry name" value="(Trans)glycosidases"/>
    <property type="match status" value="1"/>
</dbReference>
<dbReference type="SUPFAM" id="SSF54556">
    <property type="entry name" value="Chitinase insertion domain"/>
    <property type="match status" value="1"/>
</dbReference>
<dbReference type="SUPFAM" id="SSF57625">
    <property type="entry name" value="Invertebrate chitin-binding proteins"/>
    <property type="match status" value="1"/>
</dbReference>
<dbReference type="PROSITE" id="PS50940">
    <property type="entry name" value="CHIT_BIND_II"/>
    <property type="match status" value="1"/>
</dbReference>
<dbReference type="PROSITE" id="PS01095">
    <property type="entry name" value="GH18_1"/>
    <property type="match status" value="1"/>
</dbReference>
<dbReference type="PROSITE" id="PS51910">
    <property type="entry name" value="GH18_2"/>
    <property type="match status" value="1"/>
</dbReference>
<proteinExistence type="evidence at protein level"/>
<sequence length="464" mass="51112">MVQSLAWAGVMTLLMVQWGSAAKLVCYLTNWSQYRTEAVRFFPRDVDPNLCTHVIFAFAGMDNHQLSTVEHNDELLYQELNSLKTKNPKLKTLLAVGGWTFGTQKFTDMVATASNRQTFVKSALSFLRTQGFDGLDLDWEFPGGRGSPTVDKERFTALIQDLAKAFQEEAQSSGKERLLLTAAVPSDRGLVDAGYEVDKIAQSLDFINLMAYDFHSSLEKTTGHNSPLYKRQGESGAAAEQNVDAAVTLWLQKGTPASKLILGMPTYGRSFTLASSSDNGVGAPATGPGAPGPYTKDKGVLAYYEACSWKERHRIEDQKVPYAFQDNQWVSFDDVESFKAKAAYLKQKGLGGAMVWVLDLDDFKGSFCNQGPYPLIRTLRQELNLPSETPRSPEQIIPEPRPSSMPEQGPSPGLDNFCQGKADGVYPNPGDESTYYNCGGGRLFQQSCPPGLVFRASCKCCTWS</sequence>
<accession>Q9D7Q1</accession>
<accession>Q6QJD2</accession>
<organism>
    <name type="scientific">Mus musculus</name>
    <name type="common">Mouse</name>
    <dbReference type="NCBI Taxonomy" id="10090"/>
    <lineage>
        <taxon>Eukaryota</taxon>
        <taxon>Metazoa</taxon>
        <taxon>Chordata</taxon>
        <taxon>Craniata</taxon>
        <taxon>Vertebrata</taxon>
        <taxon>Euteleostomi</taxon>
        <taxon>Mammalia</taxon>
        <taxon>Eutheria</taxon>
        <taxon>Euarchontoglires</taxon>
        <taxon>Glires</taxon>
        <taxon>Rodentia</taxon>
        <taxon>Myomorpha</taxon>
        <taxon>Muroidea</taxon>
        <taxon>Muridae</taxon>
        <taxon>Murinae</taxon>
        <taxon>Mus</taxon>
        <taxon>Mus</taxon>
    </lineage>
</organism>
<evidence type="ECO:0000250" key="1"/>
<evidence type="ECO:0000255" key="2">
    <source>
        <dbReference type="PROSITE-ProRule" id="PRU00144"/>
    </source>
</evidence>
<evidence type="ECO:0000255" key="3">
    <source>
        <dbReference type="PROSITE-ProRule" id="PRU01258"/>
    </source>
</evidence>
<evidence type="ECO:0000256" key="4">
    <source>
        <dbReference type="SAM" id="MobiDB-lite"/>
    </source>
</evidence>
<evidence type="ECO:0000269" key="5">
    <source>
    </source>
</evidence>
<evidence type="ECO:0000269" key="6">
    <source>
    </source>
</evidence>
<evidence type="ECO:0000303" key="7">
    <source>
    </source>
</evidence>
<evidence type="ECO:0000305" key="8"/>
<name>CHIT1_MOUSE</name>
<protein>
    <recommendedName>
        <fullName>Chitotriosidase-1</fullName>
        <ecNumber>3.2.1.14</ecNumber>
    </recommendedName>
    <alternativeName>
        <fullName>Chitinase-1</fullName>
    </alternativeName>
</protein>
<feature type="signal peptide" evidence="1">
    <location>
        <begin position="1"/>
        <end position="21"/>
    </location>
</feature>
<feature type="chain" id="PRO_0000011942" description="Chitotriosidase-1">
    <location>
        <begin position="22"/>
        <end position="464"/>
    </location>
</feature>
<feature type="domain" description="GH18" evidence="3">
    <location>
        <begin position="22"/>
        <end position="386"/>
    </location>
</feature>
<feature type="domain" description="Chitin-binding type-2" evidence="2">
    <location>
        <begin position="415"/>
        <end position="464"/>
    </location>
</feature>
<feature type="region of interest" description="Disordered" evidence="4">
    <location>
        <begin position="385"/>
        <end position="416"/>
    </location>
</feature>
<feature type="active site" description="Proton donor" evidence="3">
    <location>
        <position position="140"/>
    </location>
</feature>
<feature type="binding site" evidence="1">
    <location>
        <begin position="70"/>
        <end position="71"/>
    </location>
    <ligand>
        <name>chitin</name>
        <dbReference type="ChEBI" id="CHEBI:17029"/>
    </ligand>
</feature>
<feature type="binding site" evidence="1">
    <location>
        <begin position="97"/>
        <end position="100"/>
    </location>
    <ligand>
        <name>chitin</name>
        <dbReference type="ChEBI" id="CHEBI:17029"/>
    </ligand>
</feature>
<feature type="binding site" evidence="1">
    <location>
        <begin position="210"/>
        <end position="213"/>
    </location>
    <ligand>
        <name>chitin</name>
        <dbReference type="ChEBI" id="CHEBI:17029"/>
    </ligand>
</feature>
<feature type="disulfide bond" evidence="3">
    <location>
        <begin position="26"/>
        <end position="51"/>
    </location>
</feature>
<feature type="disulfide bond" evidence="2">
    <location>
        <begin position="307"/>
        <end position="368"/>
    </location>
</feature>
<feature type="disulfide bond" evidence="2">
    <location>
        <begin position="448"/>
        <end position="461"/>
    </location>
</feature>
<feature type="splice variant" id="VSP_020143" description="In isoform 2." evidence="7">
    <original>AYLKQKGLGGAMVWVLDLDDFKGSFCNQGPYPLIRTLRQELNLPSETPRSPEQI</original>
    <variation>KLMGSTPTLETSPLTTTVEEGGCSSRAVLQAWCLEPLANVVPGAKFLEPHPTPV</variation>
    <location>
        <begin position="343"/>
        <end position="396"/>
    </location>
</feature>
<feature type="splice variant" id="VSP_020144" description="In isoform 2." evidence="7">
    <location>
        <begin position="397"/>
        <end position="464"/>
    </location>
</feature>
<feature type="mutagenesis site" description="Loss of activity; when associated with Q-140." evidence="6">
    <original>D</original>
    <variation>N</variation>
    <location>
        <position position="136"/>
    </location>
</feature>
<feature type="mutagenesis site" description="Loss of activity; when associated with N-136." evidence="6">
    <original>E</original>
    <variation>Q</variation>
    <location>
        <position position="140"/>
    </location>
</feature>
<gene>
    <name type="primary">Chit1</name>
</gene>
<reference key="1">
    <citation type="journal article" date="2005" name="Gene">
        <title>Molecular cloning and functional characterization of mouse chitotriosidase.</title>
        <authorList>
            <person name="Zheng T."/>
            <person name="Rabach M."/>
            <person name="Chen N.Y."/>
            <person name="Rabach L."/>
            <person name="Hu X."/>
            <person name="Elias J.A."/>
            <person name="Zhu Z."/>
        </authorList>
    </citation>
    <scope>NUCLEOTIDE SEQUENCE [MRNA] (ISOFORM 1)</scope>
    <scope>FUNCTION</scope>
    <scope>SUBCELLULAR LOCATION</scope>
    <scope>TISSUE SPECIFICITY</scope>
    <scope>MUTAGENESIS OF ASP-136 AND GLU-140</scope>
    <source>
        <strain>C57BL/6J</strain>
        <tissue>Tongue</tissue>
    </source>
</reference>
<reference key="2">
    <citation type="journal article" date="2005" name="J. Histochem. Cytochem.">
        <title>Marked differences in tissue-specific expression of chitinases in mouse and man.</title>
        <authorList>
            <person name="Boot R.G."/>
            <person name="Bussink A.P."/>
            <person name="Verhoek M."/>
            <person name="de Boer P.A.J."/>
            <person name="Moorman A.F."/>
            <person name="Aerts J.M.F.G."/>
        </authorList>
    </citation>
    <scope>NUCLEOTIDE SEQUENCE [MRNA] (ISOFORM 1)</scope>
    <scope>TISSUE SPECIFICITY</scope>
    <source>
        <strain>C57BL/6J</strain>
        <tissue>Tongue</tissue>
    </source>
</reference>
<reference key="3">
    <citation type="journal article" date="2005" name="Science">
        <title>The transcriptional landscape of the mammalian genome.</title>
        <authorList>
            <person name="Carninci P."/>
            <person name="Kasukawa T."/>
            <person name="Katayama S."/>
            <person name="Gough J."/>
            <person name="Frith M.C."/>
            <person name="Maeda N."/>
            <person name="Oyama R."/>
            <person name="Ravasi T."/>
            <person name="Lenhard B."/>
            <person name="Wells C."/>
            <person name="Kodzius R."/>
            <person name="Shimokawa K."/>
            <person name="Bajic V.B."/>
            <person name="Brenner S.E."/>
            <person name="Batalov S."/>
            <person name="Forrest A.R."/>
            <person name="Zavolan M."/>
            <person name="Davis M.J."/>
            <person name="Wilming L.G."/>
            <person name="Aidinis V."/>
            <person name="Allen J.E."/>
            <person name="Ambesi-Impiombato A."/>
            <person name="Apweiler R."/>
            <person name="Aturaliya R.N."/>
            <person name="Bailey T.L."/>
            <person name="Bansal M."/>
            <person name="Baxter L."/>
            <person name="Beisel K.W."/>
            <person name="Bersano T."/>
            <person name="Bono H."/>
            <person name="Chalk A.M."/>
            <person name="Chiu K.P."/>
            <person name="Choudhary V."/>
            <person name="Christoffels A."/>
            <person name="Clutterbuck D.R."/>
            <person name="Crowe M.L."/>
            <person name="Dalla E."/>
            <person name="Dalrymple B.P."/>
            <person name="de Bono B."/>
            <person name="Della Gatta G."/>
            <person name="di Bernardo D."/>
            <person name="Down T."/>
            <person name="Engstrom P."/>
            <person name="Fagiolini M."/>
            <person name="Faulkner G."/>
            <person name="Fletcher C.F."/>
            <person name="Fukushima T."/>
            <person name="Furuno M."/>
            <person name="Futaki S."/>
            <person name="Gariboldi M."/>
            <person name="Georgii-Hemming P."/>
            <person name="Gingeras T.R."/>
            <person name="Gojobori T."/>
            <person name="Green R.E."/>
            <person name="Gustincich S."/>
            <person name="Harbers M."/>
            <person name="Hayashi Y."/>
            <person name="Hensch T.K."/>
            <person name="Hirokawa N."/>
            <person name="Hill D."/>
            <person name="Huminiecki L."/>
            <person name="Iacono M."/>
            <person name="Ikeo K."/>
            <person name="Iwama A."/>
            <person name="Ishikawa T."/>
            <person name="Jakt M."/>
            <person name="Kanapin A."/>
            <person name="Katoh M."/>
            <person name="Kawasawa Y."/>
            <person name="Kelso J."/>
            <person name="Kitamura H."/>
            <person name="Kitano H."/>
            <person name="Kollias G."/>
            <person name="Krishnan S.P."/>
            <person name="Kruger A."/>
            <person name="Kummerfeld S.K."/>
            <person name="Kurochkin I.V."/>
            <person name="Lareau L.F."/>
            <person name="Lazarevic D."/>
            <person name="Lipovich L."/>
            <person name="Liu J."/>
            <person name="Liuni S."/>
            <person name="McWilliam S."/>
            <person name="Madan Babu M."/>
            <person name="Madera M."/>
            <person name="Marchionni L."/>
            <person name="Matsuda H."/>
            <person name="Matsuzawa S."/>
            <person name="Miki H."/>
            <person name="Mignone F."/>
            <person name="Miyake S."/>
            <person name="Morris K."/>
            <person name="Mottagui-Tabar S."/>
            <person name="Mulder N."/>
            <person name="Nakano N."/>
            <person name="Nakauchi H."/>
            <person name="Ng P."/>
            <person name="Nilsson R."/>
            <person name="Nishiguchi S."/>
            <person name="Nishikawa S."/>
            <person name="Nori F."/>
            <person name="Ohara O."/>
            <person name="Okazaki Y."/>
            <person name="Orlando V."/>
            <person name="Pang K.C."/>
            <person name="Pavan W.J."/>
            <person name="Pavesi G."/>
            <person name="Pesole G."/>
            <person name="Petrovsky N."/>
            <person name="Piazza S."/>
            <person name="Reed J."/>
            <person name="Reid J.F."/>
            <person name="Ring B.Z."/>
            <person name="Ringwald M."/>
            <person name="Rost B."/>
            <person name="Ruan Y."/>
            <person name="Salzberg S.L."/>
            <person name="Sandelin A."/>
            <person name="Schneider C."/>
            <person name="Schoenbach C."/>
            <person name="Sekiguchi K."/>
            <person name="Semple C.A."/>
            <person name="Seno S."/>
            <person name="Sessa L."/>
            <person name="Sheng Y."/>
            <person name="Shibata Y."/>
            <person name="Shimada H."/>
            <person name="Shimada K."/>
            <person name="Silva D."/>
            <person name="Sinclair B."/>
            <person name="Sperling S."/>
            <person name="Stupka E."/>
            <person name="Sugiura K."/>
            <person name="Sultana R."/>
            <person name="Takenaka Y."/>
            <person name="Taki K."/>
            <person name="Tammoja K."/>
            <person name="Tan S.L."/>
            <person name="Tang S."/>
            <person name="Taylor M.S."/>
            <person name="Tegner J."/>
            <person name="Teichmann S.A."/>
            <person name="Ueda H.R."/>
            <person name="van Nimwegen E."/>
            <person name="Verardo R."/>
            <person name="Wei C.L."/>
            <person name="Yagi K."/>
            <person name="Yamanishi H."/>
            <person name="Zabarovsky E."/>
            <person name="Zhu S."/>
            <person name="Zimmer A."/>
            <person name="Hide W."/>
            <person name="Bult C."/>
            <person name="Grimmond S.M."/>
            <person name="Teasdale R.D."/>
            <person name="Liu E.T."/>
            <person name="Brusic V."/>
            <person name="Quackenbush J."/>
            <person name="Wahlestedt C."/>
            <person name="Mattick J.S."/>
            <person name="Hume D.A."/>
            <person name="Kai C."/>
            <person name="Sasaki D."/>
            <person name="Tomaru Y."/>
            <person name="Fukuda S."/>
            <person name="Kanamori-Katayama M."/>
            <person name="Suzuki M."/>
            <person name="Aoki J."/>
            <person name="Arakawa T."/>
            <person name="Iida J."/>
            <person name="Imamura K."/>
            <person name="Itoh M."/>
            <person name="Kato T."/>
            <person name="Kawaji H."/>
            <person name="Kawagashira N."/>
            <person name="Kawashima T."/>
            <person name="Kojima M."/>
            <person name="Kondo S."/>
            <person name="Konno H."/>
            <person name="Nakano K."/>
            <person name="Ninomiya N."/>
            <person name="Nishio T."/>
            <person name="Okada M."/>
            <person name="Plessy C."/>
            <person name="Shibata K."/>
            <person name="Shiraki T."/>
            <person name="Suzuki S."/>
            <person name="Tagami M."/>
            <person name="Waki K."/>
            <person name="Watahiki A."/>
            <person name="Okamura-Oho Y."/>
            <person name="Suzuki H."/>
            <person name="Kawai J."/>
            <person name="Hayashizaki Y."/>
        </authorList>
    </citation>
    <scope>NUCLEOTIDE SEQUENCE [LARGE SCALE MRNA] (ISOFORM 2)</scope>
    <source>
        <strain>C57BL/6J</strain>
        <tissue>Tongue</tissue>
    </source>
</reference>
<comment type="function">
    <text evidence="1 6">Degrades chitin, chitotriose and chitobiose. May participate in the defense against nematodes and other pathogens (By similarity).</text>
</comment>
<comment type="catalytic activity">
    <reaction>
        <text>Random endo-hydrolysis of N-acetyl-beta-D-glucosaminide (1-&gt;4)-beta-linkages in chitin and chitodextrins.</text>
        <dbReference type="EC" id="3.2.1.14"/>
    </reaction>
</comment>
<comment type="subunit">
    <text evidence="1">Monomer.</text>
</comment>
<comment type="subcellular location">
    <subcellularLocation>
        <location evidence="6">Secreted</location>
    </subcellularLocation>
    <subcellularLocation>
        <location evidence="1">Lysosome</location>
    </subcellularLocation>
    <text evidence="1">A small proportion is lysosomal.</text>
</comment>
<comment type="alternative products">
    <event type="alternative splicing"/>
    <isoform>
        <id>Q9D7Q1-1</id>
        <name>1</name>
        <sequence type="displayed"/>
    </isoform>
    <isoform>
        <id>Q9D7Q1-2</id>
        <name>2</name>
        <sequence type="described" ref="VSP_020143 VSP_020144"/>
    </isoform>
</comment>
<comment type="tissue specificity">
    <text evidence="5 6">Highly expressed in tongue, stomach, kidney, brain, skin, testis, and bone marrow. Low level of expression was found in lung, heart, spleen, small intestine, and liver. Not detectable in pancreas, salivary gland, large intestine, uterus, or peripheral blood mononuclear cells (PBMC).</text>
</comment>
<comment type="similarity">
    <text evidence="8">Belongs to the glycosyl hydrolase 18 family. Chitinase class II subfamily.</text>
</comment>